<feature type="chain" id="PRO_1000211970" description="Large ribosomal subunit protein eL37">
    <location>
        <begin position="1"/>
        <end position="61"/>
    </location>
</feature>
<feature type="zinc finger region" description="C4-type" evidence="1">
    <location>
        <begin position="19"/>
        <end position="37"/>
    </location>
</feature>
<feature type="binding site" evidence="1">
    <location>
        <position position="19"/>
    </location>
    <ligand>
        <name>Zn(2+)</name>
        <dbReference type="ChEBI" id="CHEBI:29105"/>
    </ligand>
</feature>
<feature type="binding site" evidence="1">
    <location>
        <position position="22"/>
    </location>
    <ligand>
        <name>Zn(2+)</name>
        <dbReference type="ChEBI" id="CHEBI:29105"/>
    </ligand>
</feature>
<feature type="binding site" evidence="1">
    <location>
        <position position="34"/>
    </location>
    <ligand>
        <name>Zn(2+)</name>
        <dbReference type="ChEBI" id="CHEBI:29105"/>
    </ligand>
</feature>
<feature type="binding site" evidence="1">
    <location>
        <position position="37"/>
    </location>
    <ligand>
        <name>Zn(2+)</name>
        <dbReference type="ChEBI" id="CHEBI:29105"/>
    </ligand>
</feature>
<sequence>MKGTPSFGKMNKSHTHIRCRRCGRNAYNVSKHYCAACGFGKTKKIRRYSWQNKKVNGVRIR</sequence>
<name>RL37_SACI6</name>
<gene>
    <name evidence="1" type="primary">rpl37e</name>
    <name type="ordered locus">M164_1377</name>
</gene>
<keyword id="KW-0479">Metal-binding</keyword>
<keyword id="KW-0687">Ribonucleoprotein</keyword>
<keyword id="KW-0689">Ribosomal protein</keyword>
<keyword id="KW-0694">RNA-binding</keyword>
<keyword id="KW-0699">rRNA-binding</keyword>
<keyword id="KW-0862">Zinc</keyword>
<keyword id="KW-0863">Zinc-finger</keyword>
<proteinExistence type="inferred from homology"/>
<comment type="function">
    <text evidence="1">Binds to the 23S rRNA.</text>
</comment>
<comment type="cofactor">
    <cofactor evidence="1">
        <name>Zn(2+)</name>
        <dbReference type="ChEBI" id="CHEBI:29105"/>
    </cofactor>
    <text evidence="1">Binds 1 zinc ion per subunit.</text>
</comment>
<comment type="similarity">
    <text evidence="1">Belongs to the eukaryotic ribosomal protein eL37 family.</text>
</comment>
<evidence type="ECO:0000255" key="1">
    <source>
        <dbReference type="HAMAP-Rule" id="MF_00547"/>
    </source>
</evidence>
<evidence type="ECO:0000305" key="2"/>
<organism>
    <name type="scientific">Saccharolobus islandicus (strain M.16.4 / Kamchatka #3)</name>
    <name type="common">Sulfolobus islandicus</name>
    <dbReference type="NCBI Taxonomy" id="426118"/>
    <lineage>
        <taxon>Archaea</taxon>
        <taxon>Thermoproteota</taxon>
        <taxon>Thermoprotei</taxon>
        <taxon>Sulfolobales</taxon>
        <taxon>Sulfolobaceae</taxon>
        <taxon>Saccharolobus</taxon>
    </lineage>
</organism>
<dbReference type="EMBL" id="CP001402">
    <property type="protein sequence ID" value="ACR41983.1"/>
    <property type="molecule type" value="Genomic_DNA"/>
</dbReference>
<dbReference type="RefSeq" id="WP_012711384.1">
    <property type="nucleotide sequence ID" value="NC_012726.1"/>
</dbReference>
<dbReference type="SMR" id="C4KHB9"/>
<dbReference type="KEGG" id="sid:M164_1377"/>
<dbReference type="HOGENOM" id="CLU_208825_0_0_2"/>
<dbReference type="Proteomes" id="UP000001479">
    <property type="component" value="Chromosome"/>
</dbReference>
<dbReference type="GO" id="GO:1990904">
    <property type="term" value="C:ribonucleoprotein complex"/>
    <property type="evidence" value="ECO:0007669"/>
    <property type="project" value="UniProtKB-KW"/>
</dbReference>
<dbReference type="GO" id="GO:0005840">
    <property type="term" value="C:ribosome"/>
    <property type="evidence" value="ECO:0007669"/>
    <property type="project" value="UniProtKB-KW"/>
</dbReference>
<dbReference type="GO" id="GO:0019843">
    <property type="term" value="F:rRNA binding"/>
    <property type="evidence" value="ECO:0007669"/>
    <property type="project" value="UniProtKB-KW"/>
</dbReference>
<dbReference type="GO" id="GO:0003735">
    <property type="term" value="F:structural constituent of ribosome"/>
    <property type="evidence" value="ECO:0007669"/>
    <property type="project" value="InterPro"/>
</dbReference>
<dbReference type="GO" id="GO:0008270">
    <property type="term" value="F:zinc ion binding"/>
    <property type="evidence" value="ECO:0007669"/>
    <property type="project" value="UniProtKB-UniRule"/>
</dbReference>
<dbReference type="GO" id="GO:0006412">
    <property type="term" value="P:translation"/>
    <property type="evidence" value="ECO:0007669"/>
    <property type="project" value="UniProtKB-UniRule"/>
</dbReference>
<dbReference type="FunFam" id="2.20.25.30:FF:000003">
    <property type="entry name" value="50S ribosomal protein L37e"/>
    <property type="match status" value="1"/>
</dbReference>
<dbReference type="Gene3D" id="2.20.25.30">
    <property type="match status" value="1"/>
</dbReference>
<dbReference type="HAMAP" id="MF_00547">
    <property type="entry name" value="Ribosomal_eL37"/>
    <property type="match status" value="1"/>
</dbReference>
<dbReference type="InterPro" id="IPR001569">
    <property type="entry name" value="Ribosomal_eL37"/>
</dbReference>
<dbReference type="InterPro" id="IPR011331">
    <property type="entry name" value="Ribosomal_eL37/eL43"/>
</dbReference>
<dbReference type="InterPro" id="IPR018267">
    <property type="entry name" value="Ribosomal_eL37_CS"/>
</dbReference>
<dbReference type="InterPro" id="IPR011332">
    <property type="entry name" value="Ribosomal_zn-bd"/>
</dbReference>
<dbReference type="NCBIfam" id="NF003214">
    <property type="entry name" value="PRK04179.1"/>
    <property type="match status" value="1"/>
</dbReference>
<dbReference type="Pfam" id="PF01907">
    <property type="entry name" value="Ribosomal_L37e"/>
    <property type="match status" value="1"/>
</dbReference>
<dbReference type="SUPFAM" id="SSF57829">
    <property type="entry name" value="Zn-binding ribosomal proteins"/>
    <property type="match status" value="1"/>
</dbReference>
<dbReference type="PROSITE" id="PS01077">
    <property type="entry name" value="RIBOSOMAL_L37E"/>
    <property type="match status" value="1"/>
</dbReference>
<reference key="1">
    <citation type="journal article" date="2009" name="Proc. Natl. Acad. Sci. U.S.A.">
        <title>Biogeography of the Sulfolobus islandicus pan-genome.</title>
        <authorList>
            <person name="Reno M.L."/>
            <person name="Held N.L."/>
            <person name="Fields C.J."/>
            <person name="Burke P.V."/>
            <person name="Whitaker R.J."/>
        </authorList>
    </citation>
    <scope>NUCLEOTIDE SEQUENCE [LARGE SCALE GENOMIC DNA]</scope>
    <source>
        <strain>M.16.4 / Kamchatka #3</strain>
    </source>
</reference>
<accession>C4KHB9</accession>
<protein>
    <recommendedName>
        <fullName evidence="1">Large ribosomal subunit protein eL37</fullName>
    </recommendedName>
    <alternativeName>
        <fullName evidence="2">50S ribosomal protein L37e</fullName>
    </alternativeName>
</protein>